<gene>
    <name evidence="1" type="primary">leuS</name>
    <name type="ordered locus">MCAP_0659</name>
</gene>
<organism>
    <name type="scientific">Mycoplasma capricolum subsp. capricolum (strain California kid / ATCC 27343 / NCTC 10154)</name>
    <dbReference type="NCBI Taxonomy" id="340047"/>
    <lineage>
        <taxon>Bacteria</taxon>
        <taxon>Bacillati</taxon>
        <taxon>Mycoplasmatota</taxon>
        <taxon>Mollicutes</taxon>
        <taxon>Mycoplasmataceae</taxon>
        <taxon>Mycoplasma</taxon>
    </lineage>
</organism>
<comment type="catalytic activity">
    <reaction evidence="1">
        <text>tRNA(Leu) + L-leucine + ATP = L-leucyl-tRNA(Leu) + AMP + diphosphate</text>
        <dbReference type="Rhea" id="RHEA:11688"/>
        <dbReference type="Rhea" id="RHEA-COMP:9613"/>
        <dbReference type="Rhea" id="RHEA-COMP:9622"/>
        <dbReference type="ChEBI" id="CHEBI:30616"/>
        <dbReference type="ChEBI" id="CHEBI:33019"/>
        <dbReference type="ChEBI" id="CHEBI:57427"/>
        <dbReference type="ChEBI" id="CHEBI:78442"/>
        <dbReference type="ChEBI" id="CHEBI:78494"/>
        <dbReference type="ChEBI" id="CHEBI:456215"/>
        <dbReference type="EC" id="6.1.1.4"/>
    </reaction>
</comment>
<comment type="subcellular location">
    <subcellularLocation>
        <location evidence="1">Cytoplasm</location>
    </subcellularLocation>
</comment>
<comment type="similarity">
    <text evidence="1">Belongs to the class-I aminoacyl-tRNA synthetase family.</text>
</comment>
<protein>
    <recommendedName>
        <fullName evidence="1">Leucine--tRNA ligase</fullName>
        <ecNumber evidence="1">6.1.1.4</ecNumber>
    </recommendedName>
    <alternativeName>
        <fullName evidence="1">Leucyl-tRNA synthetase</fullName>
        <shortName evidence="1">LeuRS</shortName>
    </alternativeName>
</protein>
<proteinExistence type="inferred from homology"/>
<name>SYL_MYCCT</name>
<accession>Q2SRI9</accession>
<sequence length="804" mass="92983">MDFSHKAIEKKWQKYWKENNVYKTTDSNHKKAYVLDMFPYPSGAGLHVGHIKGYTATDVYSRFKRMQGYDVLHPIGWDAFGLPAEQYALKTGNDPRDFTLKNIENFKAQLVKMGFSYDYDKEINTADPNYYKVTQWIFKELYKKGLAENRNIDVNWCQELGTVLANDEIIEKDGLMVSERGEYPVVKKKMRQWVLKITDYADKLLKGLDNLDWPNSVKELQRNWIGKSEGCEINFKSNDINIPVFTTRADTVFGATYIVLAPENELVLKLTTPNKLDEVKKYIELTANKSEIERKDESKTKTGVFIGSYAINPLTKEQIQIWISDYVLNDYGSGAIMAVPAHDKRDWDFATKFNLPIRFVISTKDESKAFVGEGKHINSEFLNDLDRIQSLQVIHDYIEKNNLGKKKTNYKLRDWLFSRQRFYGEPFPVLYDKDNNIILVEDDDLPITLPKTDYIKPTNTGESPLANVKNWVNVKIGDREYKRETNTMPQSAGSSWYFIAYILANSKNNLIDLTSDEAKKRLEKWLPVDLYIGGQEHAVGHLLYSRFWTHFLYDLGLLPTSEPFQRLFNQGMILGPDNRKMSKSWGNVINPDDVIDTHGADALRLYEMFMGPLDASLPWSFDGLDASLKWLNRCYRMINKIEFSNTNNHKLDYVYNDVVKKVTQMITELKFNTAISQLMVLVNAIYKEELSTVYKPYIEGFVKMLSLFSPHLAEELWEKLGNNSSVTLQAWPEFDETKIVKNTVVIALQVNGKLRSTIEVEKGTDKETLIKLAQENENIIRFIKGHKNLKYIAVVDRIVNIVIE</sequence>
<reference key="1">
    <citation type="submission" date="2005-09" db="EMBL/GenBank/DDBJ databases">
        <authorList>
            <person name="Glass J.I."/>
            <person name="Lartigue C."/>
            <person name="Pfannkoch C."/>
            <person name="Baden-Tillson H."/>
            <person name="Smith H.O."/>
            <person name="Venter J.C."/>
            <person name="Roske K."/>
            <person name="Wise K.S."/>
            <person name="Calcutt M.J."/>
            <person name="Nelson W.C."/>
            <person name="Nierman W.C."/>
        </authorList>
    </citation>
    <scope>NUCLEOTIDE SEQUENCE [LARGE SCALE GENOMIC DNA]</scope>
    <source>
        <strain>California kid / ATCC 27343 / NCTC 10154</strain>
    </source>
</reference>
<evidence type="ECO:0000255" key="1">
    <source>
        <dbReference type="HAMAP-Rule" id="MF_00049"/>
    </source>
</evidence>
<keyword id="KW-0030">Aminoacyl-tRNA synthetase</keyword>
<keyword id="KW-0067">ATP-binding</keyword>
<keyword id="KW-0963">Cytoplasm</keyword>
<keyword id="KW-0436">Ligase</keyword>
<keyword id="KW-0547">Nucleotide-binding</keyword>
<keyword id="KW-0648">Protein biosynthesis</keyword>
<dbReference type="EC" id="6.1.1.4" evidence="1"/>
<dbReference type="EMBL" id="CP000123">
    <property type="protein sequence ID" value="ABC01150.1"/>
    <property type="molecule type" value="Genomic_DNA"/>
</dbReference>
<dbReference type="RefSeq" id="WP_011387520.1">
    <property type="nucleotide sequence ID" value="NC_007633.1"/>
</dbReference>
<dbReference type="SMR" id="Q2SRI9"/>
<dbReference type="GeneID" id="23778386"/>
<dbReference type="KEGG" id="mcp:MCAP_0659"/>
<dbReference type="HOGENOM" id="CLU_004427_0_0_14"/>
<dbReference type="PhylomeDB" id="Q2SRI9"/>
<dbReference type="Proteomes" id="UP000001928">
    <property type="component" value="Chromosome"/>
</dbReference>
<dbReference type="GO" id="GO:0005829">
    <property type="term" value="C:cytosol"/>
    <property type="evidence" value="ECO:0007669"/>
    <property type="project" value="TreeGrafter"/>
</dbReference>
<dbReference type="GO" id="GO:0002161">
    <property type="term" value="F:aminoacyl-tRNA deacylase activity"/>
    <property type="evidence" value="ECO:0007669"/>
    <property type="project" value="InterPro"/>
</dbReference>
<dbReference type="GO" id="GO:0005524">
    <property type="term" value="F:ATP binding"/>
    <property type="evidence" value="ECO:0007669"/>
    <property type="project" value="UniProtKB-UniRule"/>
</dbReference>
<dbReference type="GO" id="GO:0004823">
    <property type="term" value="F:leucine-tRNA ligase activity"/>
    <property type="evidence" value="ECO:0007669"/>
    <property type="project" value="UniProtKB-UniRule"/>
</dbReference>
<dbReference type="GO" id="GO:0006429">
    <property type="term" value="P:leucyl-tRNA aminoacylation"/>
    <property type="evidence" value="ECO:0007669"/>
    <property type="project" value="UniProtKB-UniRule"/>
</dbReference>
<dbReference type="CDD" id="cd07958">
    <property type="entry name" value="Anticodon_Ia_Leu_BEm"/>
    <property type="match status" value="1"/>
</dbReference>
<dbReference type="CDD" id="cd00812">
    <property type="entry name" value="LeuRS_core"/>
    <property type="match status" value="1"/>
</dbReference>
<dbReference type="FunFam" id="1.10.730.10:FF:000002">
    <property type="entry name" value="Leucine--tRNA ligase"/>
    <property type="match status" value="1"/>
</dbReference>
<dbReference type="FunFam" id="3.40.50.620:FF:000056">
    <property type="entry name" value="Leucine--tRNA ligase"/>
    <property type="match status" value="1"/>
</dbReference>
<dbReference type="FunFam" id="3.40.50.620:FF:000077">
    <property type="entry name" value="Leucine--tRNA ligase"/>
    <property type="match status" value="1"/>
</dbReference>
<dbReference type="Gene3D" id="3.10.20.590">
    <property type="match status" value="1"/>
</dbReference>
<dbReference type="Gene3D" id="3.40.50.620">
    <property type="entry name" value="HUPs"/>
    <property type="match status" value="2"/>
</dbReference>
<dbReference type="Gene3D" id="1.10.730.10">
    <property type="entry name" value="Isoleucyl-tRNA Synthetase, Domain 1"/>
    <property type="match status" value="1"/>
</dbReference>
<dbReference type="HAMAP" id="MF_00049_B">
    <property type="entry name" value="Leu_tRNA_synth_B"/>
    <property type="match status" value="1"/>
</dbReference>
<dbReference type="InterPro" id="IPR001412">
    <property type="entry name" value="aa-tRNA-synth_I_CS"/>
</dbReference>
<dbReference type="InterPro" id="IPR002300">
    <property type="entry name" value="aa-tRNA-synth_Ia"/>
</dbReference>
<dbReference type="InterPro" id="IPR002302">
    <property type="entry name" value="Leu-tRNA-ligase"/>
</dbReference>
<dbReference type="InterPro" id="IPR025709">
    <property type="entry name" value="Leu_tRNA-synth_edit"/>
</dbReference>
<dbReference type="InterPro" id="IPR013155">
    <property type="entry name" value="M/V/L/I-tRNA-synth_anticd-bd"/>
</dbReference>
<dbReference type="InterPro" id="IPR015413">
    <property type="entry name" value="Methionyl/Leucyl_tRNA_Synth"/>
</dbReference>
<dbReference type="InterPro" id="IPR014729">
    <property type="entry name" value="Rossmann-like_a/b/a_fold"/>
</dbReference>
<dbReference type="InterPro" id="IPR009080">
    <property type="entry name" value="tRNAsynth_Ia_anticodon-bd"/>
</dbReference>
<dbReference type="InterPro" id="IPR009008">
    <property type="entry name" value="Val/Leu/Ile-tRNA-synth_edit"/>
</dbReference>
<dbReference type="NCBIfam" id="TIGR00396">
    <property type="entry name" value="leuS_bact"/>
    <property type="match status" value="1"/>
</dbReference>
<dbReference type="PANTHER" id="PTHR43740:SF2">
    <property type="entry name" value="LEUCINE--TRNA LIGASE, MITOCHONDRIAL"/>
    <property type="match status" value="1"/>
</dbReference>
<dbReference type="PANTHER" id="PTHR43740">
    <property type="entry name" value="LEUCYL-TRNA SYNTHETASE"/>
    <property type="match status" value="1"/>
</dbReference>
<dbReference type="Pfam" id="PF08264">
    <property type="entry name" value="Anticodon_1"/>
    <property type="match status" value="1"/>
</dbReference>
<dbReference type="Pfam" id="PF00133">
    <property type="entry name" value="tRNA-synt_1"/>
    <property type="match status" value="1"/>
</dbReference>
<dbReference type="Pfam" id="PF13603">
    <property type="entry name" value="tRNA-synt_1_2"/>
    <property type="match status" value="1"/>
</dbReference>
<dbReference type="Pfam" id="PF09334">
    <property type="entry name" value="tRNA-synt_1g"/>
    <property type="match status" value="1"/>
</dbReference>
<dbReference type="PRINTS" id="PR00985">
    <property type="entry name" value="TRNASYNTHLEU"/>
</dbReference>
<dbReference type="SUPFAM" id="SSF47323">
    <property type="entry name" value="Anticodon-binding domain of a subclass of class I aminoacyl-tRNA synthetases"/>
    <property type="match status" value="1"/>
</dbReference>
<dbReference type="SUPFAM" id="SSF52374">
    <property type="entry name" value="Nucleotidylyl transferase"/>
    <property type="match status" value="1"/>
</dbReference>
<dbReference type="SUPFAM" id="SSF50677">
    <property type="entry name" value="ValRS/IleRS/LeuRS editing domain"/>
    <property type="match status" value="1"/>
</dbReference>
<dbReference type="PROSITE" id="PS00178">
    <property type="entry name" value="AA_TRNA_LIGASE_I"/>
    <property type="match status" value="1"/>
</dbReference>
<feature type="chain" id="PRO_1000009374" description="Leucine--tRNA ligase">
    <location>
        <begin position="1"/>
        <end position="804"/>
    </location>
</feature>
<feature type="short sequence motif" description="'HIGH' region">
    <location>
        <begin position="39"/>
        <end position="50"/>
    </location>
</feature>
<feature type="short sequence motif" description="'KMSKS' region">
    <location>
        <begin position="580"/>
        <end position="584"/>
    </location>
</feature>
<feature type="binding site" evidence="1">
    <location>
        <position position="583"/>
    </location>
    <ligand>
        <name>ATP</name>
        <dbReference type="ChEBI" id="CHEBI:30616"/>
    </ligand>
</feature>